<evidence type="ECO:0000255" key="1">
    <source>
        <dbReference type="HAMAP-Rule" id="MF_00501"/>
    </source>
</evidence>
<evidence type="ECO:0000305" key="2"/>
<keyword id="KW-0479">Metal-binding</keyword>
<keyword id="KW-1185">Reference proteome</keyword>
<keyword id="KW-0687">Ribonucleoprotein</keyword>
<keyword id="KW-0689">Ribosomal protein</keyword>
<keyword id="KW-0694">RNA-binding</keyword>
<keyword id="KW-0699">rRNA-binding</keyword>
<keyword id="KW-0862">Zinc</keyword>
<gene>
    <name evidence="1" type="primary">rpmE</name>
    <name type="ordered locus">NFA_10530</name>
</gene>
<comment type="function">
    <text evidence="1">Binds the 23S rRNA.</text>
</comment>
<comment type="cofactor">
    <cofactor evidence="1">
        <name>Zn(2+)</name>
        <dbReference type="ChEBI" id="CHEBI:29105"/>
    </cofactor>
    <text evidence="1">Binds 1 zinc ion per subunit.</text>
</comment>
<comment type="subunit">
    <text evidence="1">Part of the 50S ribosomal subunit.</text>
</comment>
<comment type="similarity">
    <text evidence="1">Belongs to the bacterial ribosomal protein bL31 family. Type A subfamily.</text>
</comment>
<accession>Q5Z0Z3</accession>
<organism>
    <name type="scientific">Nocardia farcinica (strain IFM 10152)</name>
    <dbReference type="NCBI Taxonomy" id="247156"/>
    <lineage>
        <taxon>Bacteria</taxon>
        <taxon>Bacillati</taxon>
        <taxon>Actinomycetota</taxon>
        <taxon>Actinomycetes</taxon>
        <taxon>Mycobacteriales</taxon>
        <taxon>Nocardiaceae</taxon>
        <taxon>Nocardia</taxon>
    </lineage>
</organism>
<protein>
    <recommendedName>
        <fullName evidence="1">Large ribosomal subunit protein bL31</fullName>
    </recommendedName>
    <alternativeName>
        <fullName evidence="2">50S ribosomal protein L31</fullName>
    </alternativeName>
</protein>
<proteinExistence type="inferred from homology"/>
<sequence>MKAGIHPAYVDTTVVCGCGNTFQTRSTKESGHITVEVCSQCHPFYTGKQKILDTGGRVARFEARYGKRAGKKADAK</sequence>
<reference key="1">
    <citation type="journal article" date="2004" name="Proc. Natl. Acad. Sci. U.S.A.">
        <title>The complete genomic sequence of Nocardia farcinica IFM 10152.</title>
        <authorList>
            <person name="Ishikawa J."/>
            <person name="Yamashita A."/>
            <person name="Mikami Y."/>
            <person name="Hoshino Y."/>
            <person name="Kurita H."/>
            <person name="Hotta K."/>
            <person name="Shiba T."/>
            <person name="Hattori M."/>
        </authorList>
    </citation>
    <scope>NUCLEOTIDE SEQUENCE [LARGE SCALE GENOMIC DNA]</scope>
    <source>
        <strain>IFM 10152</strain>
    </source>
</reference>
<feature type="chain" id="PRO_0000173138" description="Large ribosomal subunit protein bL31">
    <location>
        <begin position="1"/>
        <end position="76"/>
    </location>
</feature>
<feature type="binding site" evidence="1">
    <location>
        <position position="16"/>
    </location>
    <ligand>
        <name>Zn(2+)</name>
        <dbReference type="ChEBI" id="CHEBI:29105"/>
    </ligand>
</feature>
<feature type="binding site" evidence="1">
    <location>
        <position position="18"/>
    </location>
    <ligand>
        <name>Zn(2+)</name>
        <dbReference type="ChEBI" id="CHEBI:29105"/>
    </ligand>
</feature>
<feature type="binding site" evidence="1">
    <location>
        <position position="38"/>
    </location>
    <ligand>
        <name>Zn(2+)</name>
        <dbReference type="ChEBI" id="CHEBI:29105"/>
    </ligand>
</feature>
<feature type="binding site" evidence="1">
    <location>
        <position position="41"/>
    </location>
    <ligand>
        <name>Zn(2+)</name>
        <dbReference type="ChEBI" id="CHEBI:29105"/>
    </ligand>
</feature>
<dbReference type="EMBL" id="AP006618">
    <property type="protein sequence ID" value="BAD55898.1"/>
    <property type="molecule type" value="Genomic_DNA"/>
</dbReference>
<dbReference type="RefSeq" id="WP_011207583.1">
    <property type="nucleotide sequence ID" value="NC_006361.1"/>
</dbReference>
<dbReference type="SMR" id="Q5Z0Z3"/>
<dbReference type="STRING" id="247156.NFA_10530"/>
<dbReference type="GeneID" id="96241180"/>
<dbReference type="KEGG" id="nfa:NFA_10530"/>
<dbReference type="eggNOG" id="COG0254">
    <property type="taxonomic scope" value="Bacteria"/>
</dbReference>
<dbReference type="HOGENOM" id="CLU_114306_4_0_11"/>
<dbReference type="OrthoDB" id="9803251at2"/>
<dbReference type="Proteomes" id="UP000006820">
    <property type="component" value="Chromosome"/>
</dbReference>
<dbReference type="GO" id="GO:1990904">
    <property type="term" value="C:ribonucleoprotein complex"/>
    <property type="evidence" value="ECO:0007669"/>
    <property type="project" value="UniProtKB-KW"/>
</dbReference>
<dbReference type="GO" id="GO:0005840">
    <property type="term" value="C:ribosome"/>
    <property type="evidence" value="ECO:0007669"/>
    <property type="project" value="UniProtKB-KW"/>
</dbReference>
<dbReference type="GO" id="GO:0046872">
    <property type="term" value="F:metal ion binding"/>
    <property type="evidence" value="ECO:0007669"/>
    <property type="project" value="UniProtKB-KW"/>
</dbReference>
<dbReference type="GO" id="GO:0019843">
    <property type="term" value="F:rRNA binding"/>
    <property type="evidence" value="ECO:0007669"/>
    <property type="project" value="UniProtKB-KW"/>
</dbReference>
<dbReference type="GO" id="GO:0003735">
    <property type="term" value="F:structural constituent of ribosome"/>
    <property type="evidence" value="ECO:0007669"/>
    <property type="project" value="InterPro"/>
</dbReference>
<dbReference type="GO" id="GO:0006412">
    <property type="term" value="P:translation"/>
    <property type="evidence" value="ECO:0007669"/>
    <property type="project" value="UniProtKB-UniRule"/>
</dbReference>
<dbReference type="Gene3D" id="4.10.830.30">
    <property type="entry name" value="Ribosomal protein L31"/>
    <property type="match status" value="1"/>
</dbReference>
<dbReference type="HAMAP" id="MF_00501">
    <property type="entry name" value="Ribosomal_bL31_1"/>
    <property type="match status" value="1"/>
</dbReference>
<dbReference type="InterPro" id="IPR034704">
    <property type="entry name" value="Ribosomal_bL28/bL31-like_sf"/>
</dbReference>
<dbReference type="InterPro" id="IPR002150">
    <property type="entry name" value="Ribosomal_bL31"/>
</dbReference>
<dbReference type="InterPro" id="IPR027491">
    <property type="entry name" value="Ribosomal_bL31_A"/>
</dbReference>
<dbReference type="InterPro" id="IPR042105">
    <property type="entry name" value="Ribosomal_bL31_sf"/>
</dbReference>
<dbReference type="NCBIfam" id="TIGR00105">
    <property type="entry name" value="L31"/>
    <property type="match status" value="1"/>
</dbReference>
<dbReference type="NCBIfam" id="NF000612">
    <property type="entry name" value="PRK00019.1"/>
    <property type="match status" value="1"/>
</dbReference>
<dbReference type="NCBIfam" id="NF001809">
    <property type="entry name" value="PRK00528.1"/>
    <property type="match status" value="1"/>
</dbReference>
<dbReference type="PANTHER" id="PTHR33280">
    <property type="entry name" value="50S RIBOSOMAL PROTEIN L31, CHLOROPLASTIC"/>
    <property type="match status" value="1"/>
</dbReference>
<dbReference type="PANTHER" id="PTHR33280:SF1">
    <property type="entry name" value="LARGE RIBOSOMAL SUBUNIT PROTEIN BL31C"/>
    <property type="match status" value="1"/>
</dbReference>
<dbReference type="Pfam" id="PF01197">
    <property type="entry name" value="Ribosomal_L31"/>
    <property type="match status" value="1"/>
</dbReference>
<dbReference type="PRINTS" id="PR01249">
    <property type="entry name" value="RIBOSOMALL31"/>
</dbReference>
<dbReference type="SUPFAM" id="SSF143800">
    <property type="entry name" value="L28p-like"/>
    <property type="match status" value="1"/>
</dbReference>
<dbReference type="PROSITE" id="PS01143">
    <property type="entry name" value="RIBOSOMAL_L31"/>
    <property type="match status" value="1"/>
</dbReference>
<name>RL31_NOCFA</name>